<proteinExistence type="inferred from homology"/>
<gene>
    <name evidence="1" type="primary">rlmN</name>
    <name type="ordered locus">Bcep18194_A5115</name>
</gene>
<dbReference type="EC" id="2.1.1.192" evidence="1"/>
<dbReference type="EMBL" id="CP000151">
    <property type="protein sequence ID" value="ABB08709.1"/>
    <property type="molecule type" value="Genomic_DNA"/>
</dbReference>
<dbReference type="RefSeq" id="WP_011352264.1">
    <property type="nucleotide sequence ID" value="NZ_WNDV01000021.1"/>
</dbReference>
<dbReference type="SMR" id="Q39FQ7"/>
<dbReference type="GeneID" id="45094991"/>
<dbReference type="KEGG" id="bur:Bcep18194_A5115"/>
<dbReference type="PATRIC" id="fig|482957.22.peg.2053"/>
<dbReference type="HOGENOM" id="CLU_029101_0_0_4"/>
<dbReference type="Proteomes" id="UP000002705">
    <property type="component" value="Chromosome 1"/>
</dbReference>
<dbReference type="GO" id="GO:0005737">
    <property type="term" value="C:cytoplasm"/>
    <property type="evidence" value="ECO:0007669"/>
    <property type="project" value="UniProtKB-SubCell"/>
</dbReference>
<dbReference type="GO" id="GO:0051539">
    <property type="term" value="F:4 iron, 4 sulfur cluster binding"/>
    <property type="evidence" value="ECO:0007669"/>
    <property type="project" value="UniProtKB-UniRule"/>
</dbReference>
<dbReference type="GO" id="GO:0046872">
    <property type="term" value="F:metal ion binding"/>
    <property type="evidence" value="ECO:0007669"/>
    <property type="project" value="UniProtKB-KW"/>
</dbReference>
<dbReference type="GO" id="GO:0070040">
    <property type="term" value="F:rRNA (adenine(2503)-C2-)-methyltransferase activity"/>
    <property type="evidence" value="ECO:0007669"/>
    <property type="project" value="UniProtKB-UniRule"/>
</dbReference>
<dbReference type="GO" id="GO:0019843">
    <property type="term" value="F:rRNA binding"/>
    <property type="evidence" value="ECO:0007669"/>
    <property type="project" value="UniProtKB-UniRule"/>
</dbReference>
<dbReference type="GO" id="GO:0002935">
    <property type="term" value="F:tRNA (adenine(37)-C2)-methyltransferase activity"/>
    <property type="evidence" value="ECO:0007669"/>
    <property type="project" value="UniProtKB-UniRule"/>
</dbReference>
<dbReference type="GO" id="GO:0000049">
    <property type="term" value="F:tRNA binding"/>
    <property type="evidence" value="ECO:0007669"/>
    <property type="project" value="UniProtKB-UniRule"/>
</dbReference>
<dbReference type="GO" id="GO:0070475">
    <property type="term" value="P:rRNA base methylation"/>
    <property type="evidence" value="ECO:0007669"/>
    <property type="project" value="UniProtKB-UniRule"/>
</dbReference>
<dbReference type="GO" id="GO:0030488">
    <property type="term" value="P:tRNA methylation"/>
    <property type="evidence" value="ECO:0007669"/>
    <property type="project" value="UniProtKB-UniRule"/>
</dbReference>
<dbReference type="CDD" id="cd01335">
    <property type="entry name" value="Radical_SAM"/>
    <property type="match status" value="1"/>
</dbReference>
<dbReference type="FunFam" id="1.10.150.530:FF:000003">
    <property type="entry name" value="Dual-specificity RNA methyltransferase RlmN"/>
    <property type="match status" value="1"/>
</dbReference>
<dbReference type="FunFam" id="3.20.20.70:FF:000008">
    <property type="entry name" value="Dual-specificity RNA methyltransferase RlmN"/>
    <property type="match status" value="1"/>
</dbReference>
<dbReference type="Gene3D" id="1.10.150.530">
    <property type="match status" value="1"/>
</dbReference>
<dbReference type="Gene3D" id="3.20.20.70">
    <property type="entry name" value="Aldolase class I"/>
    <property type="match status" value="1"/>
</dbReference>
<dbReference type="HAMAP" id="MF_01849">
    <property type="entry name" value="RNA_methyltr_RlmN"/>
    <property type="match status" value="1"/>
</dbReference>
<dbReference type="InterPro" id="IPR013785">
    <property type="entry name" value="Aldolase_TIM"/>
</dbReference>
<dbReference type="InterPro" id="IPR040072">
    <property type="entry name" value="Methyltransferase_A"/>
</dbReference>
<dbReference type="InterPro" id="IPR048641">
    <property type="entry name" value="RlmN_N"/>
</dbReference>
<dbReference type="InterPro" id="IPR027492">
    <property type="entry name" value="RNA_MTrfase_RlmN"/>
</dbReference>
<dbReference type="InterPro" id="IPR004383">
    <property type="entry name" value="rRNA_lsu_MTrfase_RlmN/Cfr"/>
</dbReference>
<dbReference type="InterPro" id="IPR007197">
    <property type="entry name" value="rSAM"/>
</dbReference>
<dbReference type="NCBIfam" id="TIGR00048">
    <property type="entry name" value="rRNA_mod_RlmN"/>
    <property type="match status" value="1"/>
</dbReference>
<dbReference type="PANTHER" id="PTHR30544">
    <property type="entry name" value="23S RRNA METHYLTRANSFERASE"/>
    <property type="match status" value="1"/>
</dbReference>
<dbReference type="PANTHER" id="PTHR30544:SF5">
    <property type="entry name" value="RADICAL SAM CORE DOMAIN-CONTAINING PROTEIN"/>
    <property type="match status" value="1"/>
</dbReference>
<dbReference type="Pfam" id="PF04055">
    <property type="entry name" value="Radical_SAM"/>
    <property type="match status" value="1"/>
</dbReference>
<dbReference type="Pfam" id="PF21016">
    <property type="entry name" value="RlmN_N"/>
    <property type="match status" value="1"/>
</dbReference>
<dbReference type="PIRSF" id="PIRSF006004">
    <property type="entry name" value="CHP00048"/>
    <property type="match status" value="1"/>
</dbReference>
<dbReference type="SFLD" id="SFLDF00275">
    <property type="entry name" value="adenosine_C2_methyltransferase"/>
    <property type="match status" value="1"/>
</dbReference>
<dbReference type="SFLD" id="SFLDG01062">
    <property type="entry name" value="methyltransferase_(Class_A)"/>
    <property type="match status" value="1"/>
</dbReference>
<dbReference type="SUPFAM" id="SSF102114">
    <property type="entry name" value="Radical SAM enzymes"/>
    <property type="match status" value="1"/>
</dbReference>
<dbReference type="PROSITE" id="PS51918">
    <property type="entry name" value="RADICAL_SAM"/>
    <property type="match status" value="1"/>
</dbReference>
<evidence type="ECO:0000255" key="1">
    <source>
        <dbReference type="HAMAP-Rule" id="MF_01849"/>
    </source>
</evidence>
<evidence type="ECO:0000255" key="2">
    <source>
        <dbReference type="PROSITE-ProRule" id="PRU01266"/>
    </source>
</evidence>
<feature type="chain" id="PRO_0000350085" description="Dual-specificity RNA methyltransferase RlmN">
    <location>
        <begin position="1"/>
        <end position="379"/>
    </location>
</feature>
<feature type="domain" description="Radical SAM core" evidence="2">
    <location>
        <begin position="101"/>
        <end position="345"/>
    </location>
</feature>
<feature type="active site" description="Proton acceptor" evidence="1">
    <location>
        <position position="95"/>
    </location>
</feature>
<feature type="active site" description="S-methylcysteine intermediate" evidence="1">
    <location>
        <position position="350"/>
    </location>
</feature>
<feature type="binding site" evidence="1">
    <location>
        <position position="115"/>
    </location>
    <ligand>
        <name>[4Fe-4S] cluster</name>
        <dbReference type="ChEBI" id="CHEBI:49883"/>
        <note>4Fe-4S-S-AdoMet</note>
    </ligand>
</feature>
<feature type="binding site" evidence="1">
    <location>
        <position position="119"/>
    </location>
    <ligand>
        <name>[4Fe-4S] cluster</name>
        <dbReference type="ChEBI" id="CHEBI:49883"/>
        <note>4Fe-4S-S-AdoMet</note>
    </ligand>
</feature>
<feature type="binding site" evidence="1">
    <location>
        <position position="122"/>
    </location>
    <ligand>
        <name>[4Fe-4S] cluster</name>
        <dbReference type="ChEBI" id="CHEBI:49883"/>
        <note>4Fe-4S-S-AdoMet</note>
    </ligand>
</feature>
<feature type="binding site" evidence="1">
    <location>
        <begin position="176"/>
        <end position="177"/>
    </location>
    <ligand>
        <name>S-adenosyl-L-methionine</name>
        <dbReference type="ChEBI" id="CHEBI:59789"/>
    </ligand>
</feature>
<feature type="binding site" evidence="1">
    <location>
        <position position="208"/>
    </location>
    <ligand>
        <name>S-adenosyl-L-methionine</name>
        <dbReference type="ChEBI" id="CHEBI:59789"/>
    </ligand>
</feature>
<feature type="binding site" evidence="1">
    <location>
        <begin position="230"/>
        <end position="232"/>
    </location>
    <ligand>
        <name>S-adenosyl-L-methionine</name>
        <dbReference type="ChEBI" id="CHEBI:59789"/>
    </ligand>
</feature>
<feature type="binding site" evidence="1">
    <location>
        <position position="307"/>
    </location>
    <ligand>
        <name>S-adenosyl-L-methionine</name>
        <dbReference type="ChEBI" id="CHEBI:59789"/>
    </ligand>
</feature>
<feature type="disulfide bond" description="(transient)" evidence="1">
    <location>
        <begin position="108"/>
        <end position="350"/>
    </location>
</feature>
<accession>Q39FQ7</accession>
<comment type="function">
    <text evidence="1">Specifically methylates position 2 of adenine 2503 in 23S rRNA and position 2 of adenine 37 in tRNAs. m2A2503 modification seems to play a crucial role in the proofreading step occurring at the peptidyl transferase center and thus would serve to optimize ribosomal fidelity.</text>
</comment>
<comment type="catalytic activity">
    <reaction evidence="1">
        <text>adenosine(2503) in 23S rRNA + 2 reduced [2Fe-2S]-[ferredoxin] + 2 S-adenosyl-L-methionine = 2-methyladenosine(2503) in 23S rRNA + 5'-deoxyadenosine + L-methionine + 2 oxidized [2Fe-2S]-[ferredoxin] + S-adenosyl-L-homocysteine</text>
        <dbReference type="Rhea" id="RHEA:42916"/>
        <dbReference type="Rhea" id="RHEA-COMP:10000"/>
        <dbReference type="Rhea" id="RHEA-COMP:10001"/>
        <dbReference type="Rhea" id="RHEA-COMP:10152"/>
        <dbReference type="Rhea" id="RHEA-COMP:10282"/>
        <dbReference type="ChEBI" id="CHEBI:17319"/>
        <dbReference type="ChEBI" id="CHEBI:33737"/>
        <dbReference type="ChEBI" id="CHEBI:33738"/>
        <dbReference type="ChEBI" id="CHEBI:57844"/>
        <dbReference type="ChEBI" id="CHEBI:57856"/>
        <dbReference type="ChEBI" id="CHEBI:59789"/>
        <dbReference type="ChEBI" id="CHEBI:74411"/>
        <dbReference type="ChEBI" id="CHEBI:74497"/>
        <dbReference type="EC" id="2.1.1.192"/>
    </reaction>
</comment>
<comment type="catalytic activity">
    <reaction evidence="1">
        <text>adenosine(37) in tRNA + 2 reduced [2Fe-2S]-[ferredoxin] + 2 S-adenosyl-L-methionine = 2-methyladenosine(37) in tRNA + 5'-deoxyadenosine + L-methionine + 2 oxidized [2Fe-2S]-[ferredoxin] + S-adenosyl-L-homocysteine</text>
        <dbReference type="Rhea" id="RHEA:43332"/>
        <dbReference type="Rhea" id="RHEA-COMP:10000"/>
        <dbReference type="Rhea" id="RHEA-COMP:10001"/>
        <dbReference type="Rhea" id="RHEA-COMP:10162"/>
        <dbReference type="Rhea" id="RHEA-COMP:10485"/>
        <dbReference type="ChEBI" id="CHEBI:17319"/>
        <dbReference type="ChEBI" id="CHEBI:33737"/>
        <dbReference type="ChEBI" id="CHEBI:33738"/>
        <dbReference type="ChEBI" id="CHEBI:57844"/>
        <dbReference type="ChEBI" id="CHEBI:57856"/>
        <dbReference type="ChEBI" id="CHEBI:59789"/>
        <dbReference type="ChEBI" id="CHEBI:74411"/>
        <dbReference type="ChEBI" id="CHEBI:74497"/>
        <dbReference type="EC" id="2.1.1.192"/>
    </reaction>
</comment>
<comment type="cofactor">
    <cofactor evidence="1">
        <name>[4Fe-4S] cluster</name>
        <dbReference type="ChEBI" id="CHEBI:49883"/>
    </cofactor>
    <text evidence="1">Binds 1 [4Fe-4S] cluster. The cluster is coordinated with 3 cysteines and an exchangeable S-adenosyl-L-methionine.</text>
</comment>
<comment type="subcellular location">
    <subcellularLocation>
        <location evidence="1">Cytoplasm</location>
    </subcellularLocation>
</comment>
<comment type="miscellaneous">
    <text evidence="1">Reaction proceeds by a ping-pong mechanism involving intermediate methylation of a conserved cysteine residue.</text>
</comment>
<comment type="similarity">
    <text evidence="1">Belongs to the radical SAM superfamily. RlmN family.</text>
</comment>
<keyword id="KW-0004">4Fe-4S</keyword>
<keyword id="KW-0963">Cytoplasm</keyword>
<keyword id="KW-1015">Disulfide bond</keyword>
<keyword id="KW-0408">Iron</keyword>
<keyword id="KW-0411">Iron-sulfur</keyword>
<keyword id="KW-0479">Metal-binding</keyword>
<keyword id="KW-0489">Methyltransferase</keyword>
<keyword id="KW-0698">rRNA processing</keyword>
<keyword id="KW-0949">S-adenosyl-L-methionine</keyword>
<keyword id="KW-0808">Transferase</keyword>
<keyword id="KW-0819">tRNA processing</keyword>
<protein>
    <recommendedName>
        <fullName evidence="1">Dual-specificity RNA methyltransferase RlmN</fullName>
        <ecNumber evidence="1">2.1.1.192</ecNumber>
    </recommendedName>
    <alternativeName>
        <fullName evidence="1">23S rRNA (adenine(2503)-C(2))-methyltransferase</fullName>
    </alternativeName>
    <alternativeName>
        <fullName evidence="1">23S rRNA m2A2503 methyltransferase</fullName>
    </alternativeName>
    <alternativeName>
        <fullName evidence="1">Ribosomal RNA large subunit methyltransferase N</fullName>
    </alternativeName>
    <alternativeName>
        <fullName evidence="1">tRNA (adenine(37)-C(2))-methyltransferase</fullName>
    </alternativeName>
    <alternativeName>
        <fullName evidence="1">tRNA m2A37 methyltransferase</fullName>
    </alternativeName>
</protein>
<reference key="1">
    <citation type="submission" date="2005-10" db="EMBL/GenBank/DDBJ databases">
        <title>Complete sequence of chromosome 1 of Burkholderia sp. 383.</title>
        <authorList>
            <consortium name="US DOE Joint Genome Institute"/>
            <person name="Copeland A."/>
            <person name="Lucas S."/>
            <person name="Lapidus A."/>
            <person name="Barry K."/>
            <person name="Detter J.C."/>
            <person name="Glavina T."/>
            <person name="Hammon N."/>
            <person name="Israni S."/>
            <person name="Pitluck S."/>
            <person name="Chain P."/>
            <person name="Malfatti S."/>
            <person name="Shin M."/>
            <person name="Vergez L."/>
            <person name="Schmutz J."/>
            <person name="Larimer F."/>
            <person name="Land M."/>
            <person name="Kyrpides N."/>
            <person name="Lykidis A."/>
            <person name="Richardson P."/>
        </authorList>
    </citation>
    <scope>NUCLEOTIDE SEQUENCE [LARGE SCALE GENOMIC DNA]</scope>
    <source>
        <strain>ATCC 17760 / DSM 23089 / LMG 22485 / NCIMB 9086 / R18194 / 383</strain>
    </source>
</reference>
<organism>
    <name type="scientific">Burkholderia lata (strain ATCC 17760 / DSM 23089 / LMG 22485 / NCIMB 9086 / R18194 / 383)</name>
    <dbReference type="NCBI Taxonomy" id="482957"/>
    <lineage>
        <taxon>Bacteria</taxon>
        <taxon>Pseudomonadati</taxon>
        <taxon>Pseudomonadota</taxon>
        <taxon>Betaproteobacteria</taxon>
        <taxon>Burkholderiales</taxon>
        <taxon>Burkholderiaceae</taxon>
        <taxon>Burkholderia</taxon>
        <taxon>Burkholderia cepacia complex</taxon>
    </lineage>
</organism>
<sequence>MTSETTVNLLDFDAEGLVAYCGSLGEKPFRAKQLQRWIHQYNAGDFDGMTDLAKSLREKLKGRASIGMPEIASDHVSTDGTRKWLIDVGNGNAVETVFIPEETRGTLCVSSQAGCAVNCRFCSTGKQGFSRNLSTAEIIGQLRMAEFALRASLGRAPGPNGKAERVVTNVVMMGMGEPLLNYSAVVPAMRLMLDDNAYGLSRRRVTLSTSGVVPMMDRLGAELPVALAVSLHAPNDPLRDELVPLNKKYPLRELMAACQRYLKVAPRDFITFEYCMLDGVNDTEAHARELLAVTRDVPCKFNLIPFNPFPESGLIRSKPEQIKRFAQVLIDAGVVTTVRKTRGDDIDAACGQLAGAVKDRTRLAERTGAAGKIIEVRAI</sequence>
<name>RLMN_BURL3</name>